<keyword id="KW-0066">ATP synthesis</keyword>
<keyword id="KW-1003">Cell membrane</keyword>
<keyword id="KW-0139">CF(1)</keyword>
<keyword id="KW-0375">Hydrogen ion transport</keyword>
<keyword id="KW-0406">Ion transport</keyword>
<keyword id="KW-0472">Membrane</keyword>
<keyword id="KW-1185">Reference proteome</keyword>
<keyword id="KW-0813">Transport</keyword>
<comment type="function">
    <text evidence="1">F(1)F(0) ATP synthase produces ATP from ADP in the presence of a proton or sodium gradient. F-type ATPases consist of two structural domains, F(1) containing the extramembraneous catalytic core and F(0) containing the membrane proton channel, linked together by a central stalk and a peripheral stalk. During catalysis, ATP synthesis in the catalytic domain of F(1) is coupled via a rotary mechanism of the central stalk subunits to proton translocation.</text>
</comment>
<comment type="function">
    <text evidence="1">This protein is part of the stalk that links CF(0) to CF(1). It either transmits conformational changes from CF(0) to CF(1) or is implicated in proton conduction.</text>
</comment>
<comment type="subunit">
    <text evidence="1">F-type ATPases have 2 components, F(1) - the catalytic core - and F(0) - the membrane proton channel. F(1) has five subunits: alpha(3), beta(3), gamma(1), delta(1), epsilon(1). F(0) has three main subunits: a(1), b(2) and c(10-14). The alpha and beta chains form an alternating ring which encloses part of the gamma chain. F(1) is attached to F(0) by a central stalk formed by the gamma and epsilon chains, while a peripheral stalk is formed by the delta and b chains.</text>
</comment>
<comment type="subcellular location">
    <subcellularLocation>
        <location evidence="1">Cell membrane</location>
        <topology evidence="1">Peripheral membrane protein</topology>
    </subcellularLocation>
</comment>
<comment type="similarity">
    <text evidence="1">Belongs to the ATPase delta chain family.</text>
</comment>
<accession>C0Z779</accession>
<reference key="1">
    <citation type="submission" date="2005-03" db="EMBL/GenBank/DDBJ databases">
        <title>Brevibacillus brevis strain 47, complete genome.</title>
        <authorList>
            <person name="Hosoyama A."/>
            <person name="Yamada R."/>
            <person name="Hongo Y."/>
            <person name="Terui Y."/>
            <person name="Ankai A."/>
            <person name="Masuyama W."/>
            <person name="Sekiguchi M."/>
            <person name="Takeda T."/>
            <person name="Asano K."/>
            <person name="Ohji S."/>
            <person name="Ichikawa N."/>
            <person name="Narita S."/>
            <person name="Aoki N."/>
            <person name="Miura H."/>
            <person name="Matsushita S."/>
            <person name="Sekigawa T."/>
            <person name="Yamagata H."/>
            <person name="Yoshikawa H."/>
            <person name="Udaka S."/>
            <person name="Tanikawa S."/>
            <person name="Fujita N."/>
        </authorList>
    </citation>
    <scope>NUCLEOTIDE SEQUENCE [LARGE SCALE GENOMIC DNA]</scope>
    <source>
        <strain>47 / JCM 6285 / NBRC 100599</strain>
    </source>
</reference>
<feature type="chain" id="PRO_0000382068" description="ATP synthase subunit delta">
    <location>
        <begin position="1"/>
        <end position="175"/>
    </location>
</feature>
<proteinExistence type="inferred from homology"/>
<gene>
    <name evidence="1" type="primary">atpH</name>
    <name type="ordered locus">BBR47_54510</name>
</gene>
<name>ATPD_BREBN</name>
<protein>
    <recommendedName>
        <fullName evidence="1">ATP synthase subunit delta</fullName>
    </recommendedName>
    <alternativeName>
        <fullName evidence="1">ATP synthase F(1) sector subunit delta</fullName>
    </alternativeName>
    <alternativeName>
        <fullName evidence="1">F-type ATPase subunit delta</fullName>
        <shortName evidence="1">F-ATPase subunit delta</shortName>
    </alternativeName>
</protein>
<organism>
    <name type="scientific">Brevibacillus brevis (strain 47 / JCM 6285 / NBRC 100599)</name>
    <dbReference type="NCBI Taxonomy" id="358681"/>
    <lineage>
        <taxon>Bacteria</taxon>
        <taxon>Bacillati</taxon>
        <taxon>Bacillota</taxon>
        <taxon>Bacilli</taxon>
        <taxon>Bacillales</taxon>
        <taxon>Paenibacillaceae</taxon>
        <taxon>Brevibacillus</taxon>
    </lineage>
</organism>
<sequence length="175" mass="19149">MSSAVGKRYARALFEVASERSKIDQVEADLGAIVEAVEGNEDLKKIMLHPHIAADAKATLADELFKSHVGEEAFNFLNVLIENGREVDLVDIYRSFVQLANEARGFADAIVTSAKPLSTEEQNELAEKFGQTLNKKLRMTAVVDPAILGGVIIKIGDRLYDGSLKTKLETFAQKA</sequence>
<evidence type="ECO:0000255" key="1">
    <source>
        <dbReference type="HAMAP-Rule" id="MF_01416"/>
    </source>
</evidence>
<dbReference type="EMBL" id="AP008955">
    <property type="protein sequence ID" value="BAH46428.1"/>
    <property type="molecule type" value="Genomic_DNA"/>
</dbReference>
<dbReference type="RefSeq" id="WP_015893621.1">
    <property type="nucleotide sequence ID" value="NC_012491.1"/>
</dbReference>
<dbReference type="SMR" id="C0Z779"/>
<dbReference type="STRING" id="358681.BBR47_54510"/>
<dbReference type="KEGG" id="bbe:BBR47_54510"/>
<dbReference type="eggNOG" id="COG0712">
    <property type="taxonomic scope" value="Bacteria"/>
</dbReference>
<dbReference type="HOGENOM" id="CLU_085114_1_1_9"/>
<dbReference type="Proteomes" id="UP000001877">
    <property type="component" value="Chromosome"/>
</dbReference>
<dbReference type="GO" id="GO:0005886">
    <property type="term" value="C:plasma membrane"/>
    <property type="evidence" value="ECO:0007669"/>
    <property type="project" value="UniProtKB-SubCell"/>
</dbReference>
<dbReference type="GO" id="GO:0045259">
    <property type="term" value="C:proton-transporting ATP synthase complex"/>
    <property type="evidence" value="ECO:0007669"/>
    <property type="project" value="UniProtKB-KW"/>
</dbReference>
<dbReference type="GO" id="GO:0046933">
    <property type="term" value="F:proton-transporting ATP synthase activity, rotational mechanism"/>
    <property type="evidence" value="ECO:0007669"/>
    <property type="project" value="UniProtKB-UniRule"/>
</dbReference>
<dbReference type="Gene3D" id="1.10.520.20">
    <property type="entry name" value="N-terminal domain of the delta subunit of the F1F0-ATP synthase"/>
    <property type="match status" value="1"/>
</dbReference>
<dbReference type="HAMAP" id="MF_01416">
    <property type="entry name" value="ATP_synth_delta_bact"/>
    <property type="match status" value="1"/>
</dbReference>
<dbReference type="InterPro" id="IPR026015">
    <property type="entry name" value="ATP_synth_OSCP/delta_N_sf"/>
</dbReference>
<dbReference type="InterPro" id="IPR020781">
    <property type="entry name" value="ATPase_OSCP/d_CS"/>
</dbReference>
<dbReference type="InterPro" id="IPR000711">
    <property type="entry name" value="ATPase_OSCP/dsu"/>
</dbReference>
<dbReference type="NCBIfam" id="TIGR01145">
    <property type="entry name" value="ATP_synt_delta"/>
    <property type="match status" value="1"/>
</dbReference>
<dbReference type="NCBIfam" id="NF004403">
    <property type="entry name" value="PRK05758.2-4"/>
    <property type="match status" value="1"/>
</dbReference>
<dbReference type="PANTHER" id="PTHR11910">
    <property type="entry name" value="ATP SYNTHASE DELTA CHAIN"/>
    <property type="match status" value="1"/>
</dbReference>
<dbReference type="Pfam" id="PF00213">
    <property type="entry name" value="OSCP"/>
    <property type="match status" value="1"/>
</dbReference>
<dbReference type="PRINTS" id="PR00125">
    <property type="entry name" value="ATPASEDELTA"/>
</dbReference>
<dbReference type="SUPFAM" id="SSF47928">
    <property type="entry name" value="N-terminal domain of the delta subunit of the F1F0-ATP synthase"/>
    <property type="match status" value="1"/>
</dbReference>
<dbReference type="PROSITE" id="PS00389">
    <property type="entry name" value="ATPASE_DELTA"/>
    <property type="match status" value="1"/>
</dbReference>